<comment type="tissue specificity">
    <text evidence="1">Nacreous layer of shell.</text>
</comment>
<evidence type="ECO:0000269" key="1">
    <source>
    </source>
</evidence>
<evidence type="ECO:0000303" key="2">
    <source>
    </source>
</evidence>
<accession>P85372</accession>
<keyword id="KW-0903">Direct protein sequencing</keyword>
<protein>
    <recommendedName>
        <fullName evidence="2">Uncharacterized protein SMPP5</fullName>
    </recommendedName>
</protein>
<name>SMP05_NAUMA</name>
<proteinExistence type="evidence at protein level"/>
<feature type="chain" id="PRO_0000371486" description="Uncharacterized protein SMPP5">
    <location>
        <begin position="1" status="less than"/>
        <end position="6" status="greater than"/>
    </location>
</feature>
<feature type="non-terminal residue" evidence="2">
    <location>
        <position position="1"/>
    </location>
</feature>
<feature type="non-terminal residue" evidence="2">
    <location>
        <position position="6"/>
    </location>
</feature>
<sequence length="6" mass="662">FAPCPK</sequence>
<reference key="1">
    <citation type="journal article" date="2009" name="ChemBioChem">
        <title>Evolution of nacre: biochemistry and 'shellomics' of the shell organic matrix of the cephalopod Nautilus macromphalus.</title>
        <authorList>
            <person name="Marie B."/>
            <person name="Marin F."/>
            <person name="Marie A."/>
            <person name="Bedouet L."/>
            <person name="Dubost L."/>
            <person name="Alcaraz G."/>
            <person name="Milet C."/>
            <person name="Luquet G."/>
        </authorList>
    </citation>
    <scope>PROTEIN SEQUENCE</scope>
    <scope>TISSUE SPECIFICITY</scope>
    <source>
        <tissue>Shell</tissue>
    </source>
</reference>
<organism>
    <name type="scientific">Nautilus macromphalus</name>
    <name type="common">Bellybutton nautilus</name>
    <dbReference type="NCBI Taxonomy" id="34576"/>
    <lineage>
        <taxon>Eukaryota</taxon>
        <taxon>Metazoa</taxon>
        <taxon>Spiralia</taxon>
        <taxon>Lophotrochozoa</taxon>
        <taxon>Mollusca</taxon>
        <taxon>Cephalopoda</taxon>
        <taxon>Nautiloidea</taxon>
        <taxon>Nautilida</taxon>
        <taxon>Nautilidae</taxon>
        <taxon>Nautilus</taxon>
    </lineage>
</organism>